<protein>
    <recommendedName>
        <fullName evidence="1">Glutamate--tRNA ligase</fullName>
        <ecNumber evidence="1">6.1.1.17</ecNumber>
    </recommendedName>
    <alternativeName>
        <fullName evidence="1">Glutamyl-tRNA synthetase</fullName>
        <shortName evidence="1">GluRS</shortName>
    </alternativeName>
</protein>
<evidence type="ECO:0000255" key="1">
    <source>
        <dbReference type="HAMAP-Rule" id="MF_00022"/>
    </source>
</evidence>
<evidence type="ECO:0000305" key="2"/>
<proteinExistence type="inferred from homology"/>
<organism>
    <name type="scientific">Salmonella typhi</name>
    <dbReference type="NCBI Taxonomy" id="90370"/>
    <lineage>
        <taxon>Bacteria</taxon>
        <taxon>Pseudomonadati</taxon>
        <taxon>Pseudomonadota</taxon>
        <taxon>Gammaproteobacteria</taxon>
        <taxon>Enterobacterales</taxon>
        <taxon>Enterobacteriaceae</taxon>
        <taxon>Salmonella</taxon>
    </lineage>
</organism>
<keyword id="KW-0030">Aminoacyl-tRNA synthetase</keyword>
<keyword id="KW-0067">ATP-binding</keyword>
<keyword id="KW-0963">Cytoplasm</keyword>
<keyword id="KW-0436">Ligase</keyword>
<keyword id="KW-0479">Metal-binding</keyword>
<keyword id="KW-0547">Nucleotide-binding</keyword>
<keyword id="KW-0648">Protein biosynthesis</keyword>
<keyword id="KW-0862">Zinc</keyword>
<comment type="function">
    <text evidence="1">Catalyzes the attachment of glutamate to tRNA(Glu) in a two-step reaction: glutamate is first activated by ATP to form Glu-AMP and then transferred to the acceptor end of tRNA(Glu).</text>
</comment>
<comment type="catalytic activity">
    <reaction evidence="1">
        <text>tRNA(Glu) + L-glutamate + ATP = L-glutamyl-tRNA(Glu) + AMP + diphosphate</text>
        <dbReference type="Rhea" id="RHEA:23540"/>
        <dbReference type="Rhea" id="RHEA-COMP:9663"/>
        <dbReference type="Rhea" id="RHEA-COMP:9680"/>
        <dbReference type="ChEBI" id="CHEBI:29985"/>
        <dbReference type="ChEBI" id="CHEBI:30616"/>
        <dbReference type="ChEBI" id="CHEBI:33019"/>
        <dbReference type="ChEBI" id="CHEBI:78442"/>
        <dbReference type="ChEBI" id="CHEBI:78520"/>
        <dbReference type="ChEBI" id="CHEBI:456215"/>
        <dbReference type="EC" id="6.1.1.17"/>
    </reaction>
</comment>
<comment type="cofactor">
    <cofactor evidence="1">
        <name>Zn(2+)</name>
        <dbReference type="ChEBI" id="CHEBI:29105"/>
    </cofactor>
    <text evidence="1">Binds 1 zinc ion per subunit.</text>
</comment>
<comment type="subunit">
    <text evidence="1">Monomer.</text>
</comment>
<comment type="subcellular location">
    <subcellularLocation>
        <location evidence="1">Cytoplasm</location>
    </subcellularLocation>
</comment>
<comment type="similarity">
    <text evidence="1">Belongs to the class-I aminoacyl-tRNA synthetase family. Glutamate--tRNA ligase type 1 subfamily.</text>
</comment>
<comment type="sequence caution" evidence="2">
    <conflict type="frameshift">
        <sequence resource="EMBL-CDS" id="CAD07651"/>
    </conflict>
</comment>
<feature type="chain" id="PRO_0000119646" description="Glutamate--tRNA ligase">
    <location>
        <begin position="1"/>
        <end position="471"/>
    </location>
</feature>
<feature type="short sequence motif" description="'HIGH' region" evidence="1">
    <location>
        <begin position="9"/>
        <end position="19"/>
    </location>
</feature>
<feature type="short sequence motif" description="'KMSKS' region" evidence="1">
    <location>
        <begin position="237"/>
        <end position="241"/>
    </location>
</feature>
<feature type="binding site" evidence="1">
    <location>
        <position position="98"/>
    </location>
    <ligand>
        <name>Zn(2+)</name>
        <dbReference type="ChEBI" id="CHEBI:29105"/>
    </ligand>
</feature>
<feature type="binding site" evidence="1">
    <location>
        <position position="100"/>
    </location>
    <ligand>
        <name>Zn(2+)</name>
        <dbReference type="ChEBI" id="CHEBI:29105"/>
    </ligand>
</feature>
<feature type="binding site" evidence="1">
    <location>
        <position position="125"/>
    </location>
    <ligand>
        <name>Zn(2+)</name>
        <dbReference type="ChEBI" id="CHEBI:29105"/>
    </ligand>
</feature>
<feature type="binding site" evidence="1">
    <location>
        <position position="127"/>
    </location>
    <ligand>
        <name>Zn(2+)</name>
        <dbReference type="ChEBI" id="CHEBI:29105"/>
    </ligand>
</feature>
<feature type="binding site" evidence="1">
    <location>
        <position position="240"/>
    </location>
    <ligand>
        <name>ATP</name>
        <dbReference type="ChEBI" id="CHEBI:30616"/>
    </ligand>
</feature>
<gene>
    <name evidence="1" type="primary">gltX</name>
    <name type="ordered locus">STY2654</name>
    <name type="ordered locus">t0442</name>
</gene>
<sequence>MKIKTRFAPSPTGYLHVGGARTALYSWLFARHHGGEFVLRIEDTDLERSTPEAIEAIMDGMNWLNLEWDEGPYFQTKRFDRYNAVIDEMLEAGTAYKCYCSKERLEQLREDQMAKGEKPRYDGRCRHSHEHHADDEPCVVRFANPQDGSVIFDDQIRGPIEFSNQELDDLIIRRTDGSPTYNFCVVVDDWDMEITHVIRGEDHINNTPRQINILKALNAPVPMYAHVSMINGDDGKKLSKRHGAVSVMQYRDDGYLPEALLNYLVRLGWSSGDQEIFTREEMIKLFSLGAVSKSASAFNTDKLLWLNHHYINTLAPEYVATHLQWHIEQENIDTRNGPQLAELVKLLGERCKTLKEMAQSCRYFYEDFSEFDADAAKKHLRPVARQPLEVVRDKLSAITDWSAENVHHAIQATADELEVGMGKVGMPLRVAVTGAGQSPALDVTVHAIGKTRSIERINKALGFIAERESQQ</sequence>
<accession>P0A2K4</accession>
<accession>Q8Z4X1</accession>
<accession>Q8ZN97</accession>
<reference key="1">
    <citation type="journal article" date="2001" name="Nature">
        <title>Complete genome sequence of a multiple drug resistant Salmonella enterica serovar Typhi CT18.</title>
        <authorList>
            <person name="Parkhill J."/>
            <person name="Dougan G."/>
            <person name="James K.D."/>
            <person name="Thomson N.R."/>
            <person name="Pickard D."/>
            <person name="Wain J."/>
            <person name="Churcher C.M."/>
            <person name="Mungall K.L."/>
            <person name="Bentley S.D."/>
            <person name="Holden M.T.G."/>
            <person name="Sebaihia M."/>
            <person name="Baker S."/>
            <person name="Basham D."/>
            <person name="Brooks K."/>
            <person name="Chillingworth T."/>
            <person name="Connerton P."/>
            <person name="Cronin A."/>
            <person name="Davis P."/>
            <person name="Davies R.M."/>
            <person name="Dowd L."/>
            <person name="White N."/>
            <person name="Farrar J."/>
            <person name="Feltwell T."/>
            <person name="Hamlin N."/>
            <person name="Haque A."/>
            <person name="Hien T.T."/>
            <person name="Holroyd S."/>
            <person name="Jagels K."/>
            <person name="Krogh A."/>
            <person name="Larsen T.S."/>
            <person name="Leather S."/>
            <person name="Moule S."/>
            <person name="O'Gaora P."/>
            <person name="Parry C."/>
            <person name="Quail M.A."/>
            <person name="Rutherford K.M."/>
            <person name="Simmonds M."/>
            <person name="Skelton J."/>
            <person name="Stevens K."/>
            <person name="Whitehead S."/>
            <person name="Barrell B.G."/>
        </authorList>
    </citation>
    <scope>NUCLEOTIDE SEQUENCE [LARGE SCALE GENOMIC DNA]</scope>
    <source>
        <strain>CT18</strain>
    </source>
</reference>
<reference key="2">
    <citation type="journal article" date="2003" name="J. Bacteriol.">
        <title>Comparative genomics of Salmonella enterica serovar Typhi strains Ty2 and CT18.</title>
        <authorList>
            <person name="Deng W."/>
            <person name="Liou S.-R."/>
            <person name="Plunkett G. III"/>
            <person name="Mayhew G.F."/>
            <person name="Rose D.J."/>
            <person name="Burland V."/>
            <person name="Kodoyianni V."/>
            <person name="Schwartz D.C."/>
            <person name="Blattner F.R."/>
        </authorList>
    </citation>
    <scope>NUCLEOTIDE SEQUENCE [LARGE SCALE GENOMIC DNA]</scope>
    <source>
        <strain>ATCC 700931 / Ty2</strain>
    </source>
</reference>
<dbReference type="EC" id="6.1.1.17" evidence="1"/>
<dbReference type="EMBL" id="AL513382">
    <property type="protein sequence ID" value="CAD07651.1"/>
    <property type="status" value="ALT_FRAME"/>
    <property type="molecule type" value="Genomic_DNA"/>
</dbReference>
<dbReference type="EMBL" id="AE014613">
    <property type="protein sequence ID" value="AAO68156.1"/>
    <property type="molecule type" value="Genomic_DNA"/>
</dbReference>
<dbReference type="RefSeq" id="NP_456956.1">
    <property type="nucleotide sequence ID" value="NC_003198.1"/>
</dbReference>
<dbReference type="RefSeq" id="WP_000695623.1">
    <property type="nucleotide sequence ID" value="NZ_WSUR01000025.1"/>
</dbReference>
<dbReference type="SMR" id="P0A2K4"/>
<dbReference type="STRING" id="220341.gene:17586551"/>
<dbReference type="KEGG" id="stt:t0442"/>
<dbReference type="KEGG" id="sty:STY2654"/>
<dbReference type="PATRIC" id="fig|220341.7.peg.2690"/>
<dbReference type="eggNOG" id="COG0008">
    <property type="taxonomic scope" value="Bacteria"/>
</dbReference>
<dbReference type="HOGENOM" id="CLU_015768_6_0_6"/>
<dbReference type="OMA" id="HGATNVM"/>
<dbReference type="Proteomes" id="UP000000541">
    <property type="component" value="Chromosome"/>
</dbReference>
<dbReference type="Proteomes" id="UP000002670">
    <property type="component" value="Chromosome"/>
</dbReference>
<dbReference type="GO" id="GO:0005829">
    <property type="term" value="C:cytosol"/>
    <property type="evidence" value="ECO:0007669"/>
    <property type="project" value="TreeGrafter"/>
</dbReference>
<dbReference type="GO" id="GO:0005524">
    <property type="term" value="F:ATP binding"/>
    <property type="evidence" value="ECO:0007669"/>
    <property type="project" value="UniProtKB-UniRule"/>
</dbReference>
<dbReference type="GO" id="GO:0004818">
    <property type="term" value="F:glutamate-tRNA ligase activity"/>
    <property type="evidence" value="ECO:0007669"/>
    <property type="project" value="UniProtKB-UniRule"/>
</dbReference>
<dbReference type="GO" id="GO:0000049">
    <property type="term" value="F:tRNA binding"/>
    <property type="evidence" value="ECO:0007669"/>
    <property type="project" value="InterPro"/>
</dbReference>
<dbReference type="GO" id="GO:0008270">
    <property type="term" value="F:zinc ion binding"/>
    <property type="evidence" value="ECO:0007669"/>
    <property type="project" value="UniProtKB-UniRule"/>
</dbReference>
<dbReference type="GO" id="GO:0006424">
    <property type="term" value="P:glutamyl-tRNA aminoacylation"/>
    <property type="evidence" value="ECO:0007669"/>
    <property type="project" value="UniProtKB-UniRule"/>
</dbReference>
<dbReference type="CDD" id="cd00808">
    <property type="entry name" value="GluRS_core"/>
    <property type="match status" value="1"/>
</dbReference>
<dbReference type="FunFam" id="1.10.10.350:FF:000001">
    <property type="entry name" value="Glutamate--tRNA ligase"/>
    <property type="match status" value="1"/>
</dbReference>
<dbReference type="FunFam" id="3.40.50.620:FF:000007">
    <property type="entry name" value="Glutamate--tRNA ligase"/>
    <property type="match status" value="1"/>
</dbReference>
<dbReference type="Gene3D" id="1.10.10.350">
    <property type="match status" value="1"/>
</dbReference>
<dbReference type="Gene3D" id="3.40.50.620">
    <property type="entry name" value="HUPs"/>
    <property type="match status" value="1"/>
</dbReference>
<dbReference type="HAMAP" id="MF_00022">
    <property type="entry name" value="Glu_tRNA_synth_type1"/>
    <property type="match status" value="1"/>
</dbReference>
<dbReference type="InterPro" id="IPR045462">
    <property type="entry name" value="aa-tRNA-synth_I_cd-bd"/>
</dbReference>
<dbReference type="InterPro" id="IPR020751">
    <property type="entry name" value="aa-tRNA-synth_I_codon-bd_sub2"/>
</dbReference>
<dbReference type="InterPro" id="IPR001412">
    <property type="entry name" value="aa-tRNA-synth_I_CS"/>
</dbReference>
<dbReference type="InterPro" id="IPR008925">
    <property type="entry name" value="aa_tRNA-synth_I_cd-bd_sf"/>
</dbReference>
<dbReference type="InterPro" id="IPR004527">
    <property type="entry name" value="Glu-tRNA-ligase_bac/mito"/>
</dbReference>
<dbReference type="InterPro" id="IPR000924">
    <property type="entry name" value="Glu/Gln-tRNA-synth"/>
</dbReference>
<dbReference type="InterPro" id="IPR020058">
    <property type="entry name" value="Glu/Gln-tRNA-synth_Ib_cat-dom"/>
</dbReference>
<dbReference type="InterPro" id="IPR049940">
    <property type="entry name" value="GluQ/Sye"/>
</dbReference>
<dbReference type="InterPro" id="IPR033910">
    <property type="entry name" value="GluRS_core"/>
</dbReference>
<dbReference type="InterPro" id="IPR014729">
    <property type="entry name" value="Rossmann-like_a/b/a_fold"/>
</dbReference>
<dbReference type="NCBIfam" id="TIGR00464">
    <property type="entry name" value="gltX_bact"/>
    <property type="match status" value="1"/>
</dbReference>
<dbReference type="PANTHER" id="PTHR43311">
    <property type="entry name" value="GLUTAMATE--TRNA LIGASE"/>
    <property type="match status" value="1"/>
</dbReference>
<dbReference type="PANTHER" id="PTHR43311:SF2">
    <property type="entry name" value="GLUTAMATE--TRNA LIGASE, MITOCHONDRIAL-RELATED"/>
    <property type="match status" value="1"/>
</dbReference>
<dbReference type="Pfam" id="PF19269">
    <property type="entry name" value="Anticodon_2"/>
    <property type="match status" value="1"/>
</dbReference>
<dbReference type="Pfam" id="PF00749">
    <property type="entry name" value="tRNA-synt_1c"/>
    <property type="match status" value="1"/>
</dbReference>
<dbReference type="PRINTS" id="PR00987">
    <property type="entry name" value="TRNASYNTHGLU"/>
</dbReference>
<dbReference type="SUPFAM" id="SSF48163">
    <property type="entry name" value="An anticodon-binding domain of class I aminoacyl-tRNA synthetases"/>
    <property type="match status" value="1"/>
</dbReference>
<dbReference type="SUPFAM" id="SSF52374">
    <property type="entry name" value="Nucleotidylyl transferase"/>
    <property type="match status" value="1"/>
</dbReference>
<dbReference type="PROSITE" id="PS00178">
    <property type="entry name" value="AA_TRNA_LIGASE_I"/>
    <property type="match status" value="1"/>
</dbReference>
<name>SYE_SALTI</name>